<feature type="chain" id="PRO_0000351440" description="Large ribosomal subunit protein mL59">
    <location>
        <begin position="1"/>
        <end position="145"/>
    </location>
</feature>
<feature type="region of interest" description="Disordered" evidence="2">
    <location>
        <begin position="123"/>
        <end position="145"/>
    </location>
</feature>
<feature type="compositionally biased region" description="Basic and acidic residues" evidence="2">
    <location>
        <begin position="123"/>
        <end position="135"/>
    </location>
</feature>
<evidence type="ECO:0000250" key="1">
    <source>
        <dbReference type="UniProtKB" id="P23369"/>
    </source>
</evidence>
<evidence type="ECO:0000256" key="2">
    <source>
        <dbReference type="SAM" id="MobiDB-lite"/>
    </source>
</evidence>
<evidence type="ECO:0000269" key="3">
    <source>
    </source>
</evidence>
<evidence type="ECO:0000305" key="4"/>
<accession>Q9UUJ5</accession>
<name>RM25_SCHPO</name>
<sequence>MPVFTKEALERLPIQLGNFFKKFPPENPNAWTTNPNRQNPFLATRNPQNGLVINPYYSNRRQAEIYKEARLQNLDNLLPQQMSWQKDSTRHILKGLLNPKGKISERKRDEILENRRLKLSESLKKTSKFKNERQKASKIAKPSPF</sequence>
<dbReference type="EMBL" id="CU329670">
    <property type="protein sequence ID" value="CAB52578.2"/>
    <property type="molecule type" value="Genomic_DNA"/>
</dbReference>
<dbReference type="PIR" id="T37942">
    <property type="entry name" value="T37942"/>
</dbReference>
<dbReference type="RefSeq" id="NP_594816.2">
    <property type="nucleotide sequence ID" value="NM_001020245.2"/>
</dbReference>
<dbReference type="SMR" id="Q9UUJ5"/>
<dbReference type="ComplexPortal" id="CPX-10323">
    <property type="entry name" value="54S mitochondrial large ribosomal subunit"/>
</dbReference>
<dbReference type="FunCoup" id="Q9UUJ5">
    <property type="interactions" value="48"/>
</dbReference>
<dbReference type="STRING" id="284812.Q9UUJ5"/>
<dbReference type="iPTMnet" id="Q9UUJ5"/>
<dbReference type="PaxDb" id="4896-SPAC1952.14c.1"/>
<dbReference type="EnsemblFungi" id="SPAC1952.14c.1">
    <property type="protein sequence ID" value="SPAC1952.14c.1:pep"/>
    <property type="gene ID" value="SPAC1952.14c"/>
</dbReference>
<dbReference type="GeneID" id="2542604"/>
<dbReference type="KEGG" id="spo:2542604"/>
<dbReference type="PomBase" id="SPAC1952.14c">
    <property type="gene designation" value="mrpl25"/>
</dbReference>
<dbReference type="VEuPathDB" id="FungiDB:SPAC1952.14c"/>
<dbReference type="HOGENOM" id="CLU_076154_2_0_1"/>
<dbReference type="InParanoid" id="Q9UUJ5"/>
<dbReference type="OMA" id="VISKEVW"/>
<dbReference type="PRO" id="PR:Q9UUJ5"/>
<dbReference type="Proteomes" id="UP000002485">
    <property type="component" value="Chromosome I"/>
</dbReference>
<dbReference type="GO" id="GO:0005762">
    <property type="term" value="C:mitochondrial large ribosomal subunit"/>
    <property type="evidence" value="ECO:0000318"/>
    <property type="project" value="GO_Central"/>
</dbReference>
<dbReference type="GO" id="GO:0005739">
    <property type="term" value="C:mitochondrion"/>
    <property type="evidence" value="ECO:0007005"/>
    <property type="project" value="PomBase"/>
</dbReference>
<dbReference type="GO" id="GO:0003735">
    <property type="term" value="F:structural constituent of ribosome"/>
    <property type="evidence" value="ECO:0000318"/>
    <property type="project" value="GO_Central"/>
</dbReference>
<dbReference type="GO" id="GO:0032543">
    <property type="term" value="P:mitochondrial translation"/>
    <property type="evidence" value="ECO:0000250"/>
    <property type="project" value="PomBase"/>
</dbReference>
<dbReference type="InterPro" id="IPR037507">
    <property type="entry name" value="Ribosomal_mL59"/>
</dbReference>
<dbReference type="InterPro" id="IPR040922">
    <property type="entry name" value="Ribosomal_mL59_dom"/>
</dbReference>
<dbReference type="PANTHER" id="PTHR28041">
    <property type="entry name" value="54S RIBOSOMAL PROTEIN L25, MITOCHONDRIAL"/>
    <property type="match status" value="1"/>
</dbReference>
<dbReference type="PANTHER" id="PTHR28041:SF1">
    <property type="entry name" value="LARGE RIBOSOMAL SUBUNIT PROTEIN ML59"/>
    <property type="match status" value="1"/>
</dbReference>
<dbReference type="Pfam" id="PF18126">
    <property type="entry name" value="Mitoc_mL59"/>
    <property type="match status" value="1"/>
</dbReference>
<protein>
    <recommendedName>
        <fullName evidence="4">Large ribosomal subunit protein mL59</fullName>
    </recommendedName>
    <alternativeName>
        <fullName>54S ribosomal protein L25, mitochondrial</fullName>
    </alternativeName>
</protein>
<organism>
    <name type="scientific">Schizosaccharomyces pombe (strain 972 / ATCC 24843)</name>
    <name type="common">Fission yeast</name>
    <dbReference type="NCBI Taxonomy" id="284812"/>
    <lineage>
        <taxon>Eukaryota</taxon>
        <taxon>Fungi</taxon>
        <taxon>Dikarya</taxon>
        <taxon>Ascomycota</taxon>
        <taxon>Taphrinomycotina</taxon>
        <taxon>Schizosaccharomycetes</taxon>
        <taxon>Schizosaccharomycetales</taxon>
        <taxon>Schizosaccharomycetaceae</taxon>
        <taxon>Schizosaccharomyces</taxon>
    </lineage>
</organism>
<keyword id="KW-0496">Mitochondrion</keyword>
<keyword id="KW-1185">Reference proteome</keyword>
<keyword id="KW-0687">Ribonucleoprotein</keyword>
<keyword id="KW-0689">Ribosomal protein</keyword>
<proteinExistence type="inferred from homology"/>
<reference key="1">
    <citation type="journal article" date="2002" name="Nature">
        <title>The genome sequence of Schizosaccharomyces pombe.</title>
        <authorList>
            <person name="Wood V."/>
            <person name="Gwilliam R."/>
            <person name="Rajandream M.A."/>
            <person name="Lyne M.H."/>
            <person name="Lyne R."/>
            <person name="Stewart A."/>
            <person name="Sgouros J.G."/>
            <person name="Peat N."/>
            <person name="Hayles J."/>
            <person name="Baker S.G."/>
            <person name="Basham D."/>
            <person name="Bowman S."/>
            <person name="Brooks K."/>
            <person name="Brown D."/>
            <person name="Brown S."/>
            <person name="Chillingworth T."/>
            <person name="Churcher C.M."/>
            <person name="Collins M."/>
            <person name="Connor R."/>
            <person name="Cronin A."/>
            <person name="Davis P."/>
            <person name="Feltwell T."/>
            <person name="Fraser A."/>
            <person name="Gentles S."/>
            <person name="Goble A."/>
            <person name="Hamlin N."/>
            <person name="Harris D.E."/>
            <person name="Hidalgo J."/>
            <person name="Hodgson G."/>
            <person name="Holroyd S."/>
            <person name="Hornsby T."/>
            <person name="Howarth S."/>
            <person name="Huckle E.J."/>
            <person name="Hunt S."/>
            <person name="Jagels K."/>
            <person name="James K.D."/>
            <person name="Jones L."/>
            <person name="Jones M."/>
            <person name="Leather S."/>
            <person name="McDonald S."/>
            <person name="McLean J."/>
            <person name="Mooney P."/>
            <person name="Moule S."/>
            <person name="Mungall K.L."/>
            <person name="Murphy L.D."/>
            <person name="Niblett D."/>
            <person name="Odell C."/>
            <person name="Oliver K."/>
            <person name="O'Neil S."/>
            <person name="Pearson D."/>
            <person name="Quail M.A."/>
            <person name="Rabbinowitsch E."/>
            <person name="Rutherford K.M."/>
            <person name="Rutter S."/>
            <person name="Saunders D."/>
            <person name="Seeger K."/>
            <person name="Sharp S."/>
            <person name="Skelton J."/>
            <person name="Simmonds M.N."/>
            <person name="Squares R."/>
            <person name="Squares S."/>
            <person name="Stevens K."/>
            <person name="Taylor K."/>
            <person name="Taylor R.G."/>
            <person name="Tivey A."/>
            <person name="Walsh S.V."/>
            <person name="Warren T."/>
            <person name="Whitehead S."/>
            <person name="Woodward J.R."/>
            <person name="Volckaert G."/>
            <person name="Aert R."/>
            <person name="Robben J."/>
            <person name="Grymonprez B."/>
            <person name="Weltjens I."/>
            <person name="Vanstreels E."/>
            <person name="Rieger M."/>
            <person name="Schaefer M."/>
            <person name="Mueller-Auer S."/>
            <person name="Gabel C."/>
            <person name="Fuchs M."/>
            <person name="Duesterhoeft A."/>
            <person name="Fritzc C."/>
            <person name="Holzer E."/>
            <person name="Moestl D."/>
            <person name="Hilbert H."/>
            <person name="Borzym K."/>
            <person name="Langer I."/>
            <person name="Beck A."/>
            <person name="Lehrach H."/>
            <person name="Reinhardt R."/>
            <person name="Pohl T.M."/>
            <person name="Eger P."/>
            <person name="Zimmermann W."/>
            <person name="Wedler H."/>
            <person name="Wambutt R."/>
            <person name="Purnelle B."/>
            <person name="Goffeau A."/>
            <person name="Cadieu E."/>
            <person name="Dreano S."/>
            <person name="Gloux S."/>
            <person name="Lelaure V."/>
            <person name="Mottier S."/>
            <person name="Galibert F."/>
            <person name="Aves S.J."/>
            <person name="Xiang Z."/>
            <person name="Hunt C."/>
            <person name="Moore K."/>
            <person name="Hurst S.M."/>
            <person name="Lucas M."/>
            <person name="Rochet M."/>
            <person name="Gaillardin C."/>
            <person name="Tallada V.A."/>
            <person name="Garzon A."/>
            <person name="Thode G."/>
            <person name="Daga R.R."/>
            <person name="Cruzado L."/>
            <person name="Jimenez J."/>
            <person name="Sanchez M."/>
            <person name="del Rey F."/>
            <person name="Benito J."/>
            <person name="Dominguez A."/>
            <person name="Revuelta J.L."/>
            <person name="Moreno S."/>
            <person name="Armstrong J."/>
            <person name="Forsburg S.L."/>
            <person name="Cerutti L."/>
            <person name="Lowe T."/>
            <person name="McCombie W.R."/>
            <person name="Paulsen I."/>
            <person name="Potashkin J."/>
            <person name="Shpakovski G.V."/>
            <person name="Ussery D."/>
            <person name="Barrell B.G."/>
            <person name="Nurse P."/>
        </authorList>
    </citation>
    <scope>NUCLEOTIDE SEQUENCE [LARGE SCALE GENOMIC DNA]</scope>
    <source>
        <strain>972 / ATCC 24843</strain>
    </source>
</reference>
<reference key="2">
    <citation type="journal article" date="2011" name="Science">
        <title>Comparative functional genomics of the fission yeasts.</title>
        <authorList>
            <person name="Rhind N."/>
            <person name="Chen Z."/>
            <person name="Yassour M."/>
            <person name="Thompson D.A."/>
            <person name="Haas B.J."/>
            <person name="Habib N."/>
            <person name="Wapinski I."/>
            <person name="Roy S."/>
            <person name="Lin M.F."/>
            <person name="Heiman D.I."/>
            <person name="Young S.K."/>
            <person name="Furuya K."/>
            <person name="Guo Y."/>
            <person name="Pidoux A."/>
            <person name="Chen H.M."/>
            <person name="Robbertse B."/>
            <person name="Goldberg J.M."/>
            <person name="Aoki K."/>
            <person name="Bayne E.H."/>
            <person name="Berlin A.M."/>
            <person name="Desjardins C.A."/>
            <person name="Dobbs E."/>
            <person name="Dukaj L."/>
            <person name="Fan L."/>
            <person name="FitzGerald M.G."/>
            <person name="French C."/>
            <person name="Gujja S."/>
            <person name="Hansen K."/>
            <person name="Keifenheim D."/>
            <person name="Levin J.Z."/>
            <person name="Mosher R.A."/>
            <person name="Mueller C.A."/>
            <person name="Pfiffner J."/>
            <person name="Priest M."/>
            <person name="Russ C."/>
            <person name="Smialowska A."/>
            <person name="Swoboda P."/>
            <person name="Sykes S.M."/>
            <person name="Vaughn M."/>
            <person name="Vengrova S."/>
            <person name="Yoder R."/>
            <person name="Zeng Q."/>
            <person name="Allshire R."/>
            <person name="Baulcombe D."/>
            <person name="Birren B.W."/>
            <person name="Brown W."/>
            <person name="Ekwall K."/>
            <person name="Kellis M."/>
            <person name="Leatherwood J."/>
            <person name="Levin H."/>
            <person name="Margalit H."/>
            <person name="Martienssen R."/>
            <person name="Nieduszynski C.A."/>
            <person name="Spatafora J.W."/>
            <person name="Friedman N."/>
            <person name="Dalgaard J.Z."/>
            <person name="Baumann P."/>
            <person name="Niki H."/>
            <person name="Regev A."/>
            <person name="Nusbaum C."/>
        </authorList>
    </citation>
    <scope>REVISION OF GENE MODEL</scope>
</reference>
<reference key="3">
    <citation type="journal article" date="2006" name="Nat. Biotechnol.">
        <title>ORFeome cloning and global analysis of protein localization in the fission yeast Schizosaccharomyces pombe.</title>
        <authorList>
            <person name="Matsuyama A."/>
            <person name="Arai R."/>
            <person name="Yashiroda Y."/>
            <person name="Shirai A."/>
            <person name="Kamata A."/>
            <person name="Sekido S."/>
            <person name="Kobayashi Y."/>
            <person name="Hashimoto A."/>
            <person name="Hamamoto M."/>
            <person name="Hiraoka Y."/>
            <person name="Horinouchi S."/>
            <person name="Yoshida M."/>
        </authorList>
    </citation>
    <scope>SUBCELLULAR LOCATION [LARGE SCALE ANALYSIS]</scope>
</reference>
<gene>
    <name type="primary">mrpl25</name>
    <name type="ORF">SPAC1952.14c</name>
</gene>
<comment type="function">
    <text evidence="1">Component of the mitochondrial ribosome (mitoribosome), a dedicated translation machinery responsible for the synthesis of mitochondrial genome-encoded proteins, including at least some of the essential transmembrane subunits of the mitochondrial respiratory chain. The mitoribosomes are attached to the mitochondrial inner membrane and translation products are cotranslationally integrated into the membrane.</text>
</comment>
<comment type="subunit">
    <text evidence="1">Component of the mitochondrial large ribosomal subunit (mt-LSU). Mature yeast 74S mitochondrial ribosomes consist of a small (37S) and a large (54S) subunit. The 37S small subunit contains a 15S ribosomal RNA (15S mt-rRNA) and at least 32 different proteins. The 54S large subunit contains a 21S rRNA (21S mt-rRNA) and at least 45 different proteins.</text>
</comment>
<comment type="subcellular location">
    <subcellularLocation>
        <location evidence="3">Mitochondrion</location>
    </subcellularLocation>
</comment>
<comment type="similarity">
    <text evidence="4">Belongs to the mitochondrion-specific ribosomal protein mL59 family.</text>
</comment>